<comment type="function">
    <text evidence="2">This excitatory toxin inhibits insect calcium-activated potassium (KCa) channels (Slo-type).</text>
</comment>
<comment type="subcellular location">
    <subcellularLocation>
        <location>Secreted</location>
    </subcellularLocation>
</comment>
<comment type="tissue specificity">
    <text>Expressed by the venom gland.</text>
</comment>
<comment type="domain">
    <text evidence="1">The presence of a 'disulfide through disulfide knot' structurally defines this protein as a knottin.</text>
</comment>
<comment type="similarity">
    <text evidence="3">Belongs to the neurotoxin 11 (kappa toxin) family.</text>
</comment>
<comment type="caution">
    <text evidence="3">This toxin has the prefix lambda in its name (instead of kappa), since lambda is the Greek letter attributed to calcium-activated potassium (KCa) channel impairing toxins (according to the nomenclature of King et al., 2008).</text>
</comment>
<proteinExistence type="evidence at protein level"/>
<keyword id="KW-1221">Calcium-activated potassium channel impairing toxin</keyword>
<keyword id="KW-0903">Direct protein sequencing</keyword>
<keyword id="KW-1015">Disulfide bond</keyword>
<keyword id="KW-0872">Ion channel impairing toxin</keyword>
<keyword id="KW-0960">Knottin</keyword>
<keyword id="KW-0528">Neurotoxin</keyword>
<keyword id="KW-0632">Potassium channel impairing toxin</keyword>
<keyword id="KW-0964">Secreted</keyword>
<keyword id="KW-0800">Toxin</keyword>
<feature type="peptide" id="PRO_0000280461" description="Lambda-hexatoxin-Hf1a">
    <location>
        <begin position="1"/>
        <end position="37"/>
    </location>
</feature>
<feature type="site" description="Critical for the neurotoxic activity" evidence="1">
    <location>
        <position position="9"/>
    </location>
</feature>
<feature type="site" description="Critical for the neurotoxic activity" evidence="1">
    <location>
        <position position="10"/>
    </location>
</feature>
<feature type="site" description="Critical for the neurotoxic activity" evidence="1">
    <location>
        <position position="14"/>
    </location>
</feature>
<feature type="site" description="Critical for the neurotoxic activity" evidence="1">
    <location>
        <position position="15"/>
    </location>
</feature>
<feature type="site" description="Important for the neurotoxic activity" evidence="1">
    <location>
        <position position="31"/>
    </location>
</feature>
<feature type="site" description="Critical for the neurotoxic activity" evidence="1">
    <location>
        <position position="33"/>
    </location>
</feature>
<feature type="disulfide bond" evidence="1">
    <location>
        <begin position="4"/>
        <end position="18"/>
    </location>
</feature>
<feature type="disulfide bond" evidence="1">
    <location>
        <begin position="11"/>
        <end position="23"/>
    </location>
</feature>
<feature type="disulfide bond" evidence="1">
    <location>
        <begin position="14"/>
        <end position="15"/>
    </location>
</feature>
<feature type="disulfide bond" evidence="1">
    <location>
        <begin position="17"/>
        <end position="34"/>
    </location>
</feature>
<dbReference type="SMR" id="P0C2L8"/>
<dbReference type="ArachnoServer" id="AS000171">
    <property type="toxin name" value="kappa-hexatoxin-Hf1a"/>
</dbReference>
<dbReference type="GO" id="GO:0005576">
    <property type="term" value="C:extracellular region"/>
    <property type="evidence" value="ECO:0007669"/>
    <property type="project" value="UniProtKB-SubCell"/>
</dbReference>
<dbReference type="GO" id="GO:0015459">
    <property type="term" value="F:potassium channel regulator activity"/>
    <property type="evidence" value="ECO:0007669"/>
    <property type="project" value="UniProtKB-KW"/>
</dbReference>
<dbReference type="GO" id="GO:0090729">
    <property type="term" value="F:toxin activity"/>
    <property type="evidence" value="ECO:0007669"/>
    <property type="project" value="UniProtKB-KW"/>
</dbReference>
<dbReference type="InterPro" id="IPR012499">
    <property type="entry name" value="Toxin_16"/>
</dbReference>
<dbReference type="Pfam" id="PF07945">
    <property type="entry name" value="Toxin_16"/>
    <property type="match status" value="1"/>
</dbReference>
<dbReference type="SUPFAM" id="SSF57059">
    <property type="entry name" value="omega toxin-like"/>
    <property type="match status" value="1"/>
</dbReference>
<dbReference type="PROSITE" id="PS60020">
    <property type="entry name" value="J_ACTX"/>
    <property type="match status" value="1"/>
</dbReference>
<organism>
    <name type="scientific">Hadronyche formidabilis</name>
    <name type="common">Northern tree funnel-web spider</name>
    <name type="synonym">Atrax formidabilis</name>
    <dbReference type="NCBI Taxonomy" id="426499"/>
    <lineage>
        <taxon>Eukaryota</taxon>
        <taxon>Metazoa</taxon>
        <taxon>Ecdysozoa</taxon>
        <taxon>Arthropoda</taxon>
        <taxon>Chelicerata</taxon>
        <taxon>Arachnida</taxon>
        <taxon>Araneae</taxon>
        <taxon>Mygalomorphae</taxon>
        <taxon>Hexathelidae</taxon>
        <taxon>Hadronyche</taxon>
    </lineage>
</organism>
<accession>P0C2L8</accession>
<protein>
    <recommendedName>
        <fullName evidence="3">Lambda-hexatoxin-Hf1a</fullName>
        <shortName evidence="3">Lambda-HXTX-Hf1a</shortName>
    </recommendedName>
    <alternativeName>
        <fullName>Janus-atracotoxin-Hf1a</fullName>
        <shortName>Janus-AcTx-Hf1a</shortName>
    </alternativeName>
    <alternativeName>
        <fullName>Kappa-atracotoxin-Hf1a</fullName>
        <shortName>Kappa-AcTx-Hf1a</shortName>
    </alternativeName>
    <alternativeName>
        <fullName evidence="3">Kappa-hexatoxin-Hf1a</fullName>
        <shortName evidence="3">Kappa-HXTX-Hf1a</shortName>
    </alternativeName>
</protein>
<sequence length="37" mass="3722">SPTCTGADRPCAACCPCCPGTSCKGPEPNGVSYCRND</sequence>
<evidence type="ECO:0000250" key="1"/>
<evidence type="ECO:0000250" key="2">
    <source>
        <dbReference type="UniProtKB" id="P82228"/>
    </source>
</evidence>
<evidence type="ECO:0000305" key="3"/>
<reference key="1">
    <citation type="patent" date="1998-06-09" number="US5763568">
        <title>Insecticidal toxins derived from funnel web (Atrax or Hadronyche) spiders.</title>
        <authorList>
            <person name="Atkinson R.K."/>
            <person name="Howden M.E.H."/>
            <person name="Tyler M.I."/>
            <person name="Vonarx E.J."/>
        </authorList>
    </citation>
    <scope>PROTEIN SEQUENCE</scope>
</reference>
<name>TK1A_HADFO</name>